<dbReference type="EMBL" id="AAFC03016846">
    <property type="status" value="NOT_ANNOTATED_CDS"/>
    <property type="molecule type" value="Genomic_DNA"/>
</dbReference>
<dbReference type="EMBL" id="AAFC03016847">
    <property type="status" value="NOT_ANNOTATED_CDS"/>
    <property type="molecule type" value="Genomic_DNA"/>
</dbReference>
<dbReference type="RefSeq" id="NP_001103452.1">
    <property type="nucleotide sequence ID" value="NM_001109982.1"/>
</dbReference>
<dbReference type="PDB" id="4A4M">
    <property type="method" value="X-ray"/>
    <property type="resolution" value="3.30 A"/>
    <property type="chains" value="B=344-354"/>
</dbReference>
<dbReference type="PDB" id="5EN0">
    <property type="method" value="X-ray"/>
    <property type="resolution" value="2.81 A"/>
    <property type="chains" value="B=344-354"/>
</dbReference>
<dbReference type="PDBsum" id="4A4M"/>
<dbReference type="PDBsum" id="5EN0"/>
<dbReference type="SMR" id="P0C7Q4"/>
<dbReference type="FunCoup" id="P0C7Q4">
    <property type="interactions" value="635"/>
</dbReference>
<dbReference type="STRING" id="9913.ENSBTAP00000011395"/>
<dbReference type="PaxDb" id="9913-ENSBTAP00000011395"/>
<dbReference type="Ensembl" id="ENSBTAT00000011395.7">
    <property type="protein sequence ID" value="ENSBTAP00000011395.6"/>
    <property type="gene ID" value="ENSBTAG00000008641.7"/>
</dbReference>
<dbReference type="GeneID" id="516262"/>
<dbReference type="KEGG" id="bta:516262"/>
<dbReference type="CTD" id="346562"/>
<dbReference type="VEuPathDB" id="HostDB:ENSBTAG00000008641"/>
<dbReference type="VGNC" id="VGNC:29456">
    <property type="gene designation" value="GNAT3"/>
</dbReference>
<dbReference type="eggNOG" id="KOG0082">
    <property type="taxonomic scope" value="Eukaryota"/>
</dbReference>
<dbReference type="GeneTree" id="ENSGT00940000161422"/>
<dbReference type="InParanoid" id="P0C7Q4"/>
<dbReference type="OMA" id="EDQRQLC"/>
<dbReference type="OrthoDB" id="5817230at2759"/>
<dbReference type="Reactome" id="R-BTA-170670">
    <property type="pathway name" value="Adenylate cyclase inhibitory pathway"/>
</dbReference>
<dbReference type="Reactome" id="R-BTA-381771">
    <property type="pathway name" value="Synthesis, secretion, and inactivation of Glucagon-like Peptide-1 (GLP-1)"/>
</dbReference>
<dbReference type="Reactome" id="R-BTA-392170">
    <property type="pathway name" value="ADP signalling through P2Y purinoceptor 12"/>
</dbReference>
<dbReference type="Reactome" id="R-BTA-418594">
    <property type="pathway name" value="G alpha (i) signalling events"/>
</dbReference>
<dbReference type="Reactome" id="R-BTA-9009391">
    <property type="pathway name" value="Extra-nuclear estrogen signaling"/>
</dbReference>
<dbReference type="Reactome" id="R-BTA-9717207">
    <property type="pathway name" value="Sensory perception of sweet, bitter, and umami (glutamate) taste"/>
</dbReference>
<dbReference type="Proteomes" id="UP000009136">
    <property type="component" value="Chromosome 4"/>
</dbReference>
<dbReference type="Bgee" id="ENSBTAG00000008641">
    <property type="expression patterns" value="Expressed in oocyte and 8 other cell types or tissues"/>
</dbReference>
<dbReference type="GO" id="GO:0005737">
    <property type="term" value="C:cytoplasm"/>
    <property type="evidence" value="ECO:0000318"/>
    <property type="project" value="GO_Central"/>
</dbReference>
<dbReference type="GO" id="GO:0005834">
    <property type="term" value="C:heterotrimeric G-protein complex"/>
    <property type="evidence" value="ECO:0000318"/>
    <property type="project" value="GO_Central"/>
</dbReference>
<dbReference type="GO" id="GO:0001664">
    <property type="term" value="F:G protein-coupled receptor binding"/>
    <property type="evidence" value="ECO:0000318"/>
    <property type="project" value="GO_Central"/>
</dbReference>
<dbReference type="GO" id="GO:0031683">
    <property type="term" value="F:G-protein beta/gamma-subunit complex binding"/>
    <property type="evidence" value="ECO:0000318"/>
    <property type="project" value="GO_Central"/>
</dbReference>
<dbReference type="GO" id="GO:0005525">
    <property type="term" value="F:GTP binding"/>
    <property type="evidence" value="ECO:0007669"/>
    <property type="project" value="UniProtKB-KW"/>
</dbReference>
<dbReference type="GO" id="GO:0003924">
    <property type="term" value="F:GTPase activity"/>
    <property type="evidence" value="ECO:0000318"/>
    <property type="project" value="GO_Central"/>
</dbReference>
<dbReference type="GO" id="GO:0046872">
    <property type="term" value="F:metal ion binding"/>
    <property type="evidence" value="ECO:0007669"/>
    <property type="project" value="UniProtKB-KW"/>
</dbReference>
<dbReference type="GO" id="GO:0007188">
    <property type="term" value="P:adenylate cyclase-modulating G protein-coupled receptor signaling pathway"/>
    <property type="evidence" value="ECO:0000318"/>
    <property type="project" value="GO_Central"/>
</dbReference>
<dbReference type="GO" id="GO:0050908">
    <property type="term" value="P:detection of light stimulus involved in visual perception"/>
    <property type="evidence" value="ECO:0000318"/>
    <property type="project" value="GO_Central"/>
</dbReference>
<dbReference type="GO" id="GO:0007603">
    <property type="term" value="P:phototransduction, visible light"/>
    <property type="evidence" value="ECO:0000318"/>
    <property type="project" value="GO_Central"/>
</dbReference>
<dbReference type="GO" id="GO:0050913">
    <property type="term" value="P:sensory perception of bitter taste"/>
    <property type="evidence" value="ECO:0007669"/>
    <property type="project" value="Ensembl"/>
</dbReference>
<dbReference type="GO" id="GO:0050916">
    <property type="term" value="P:sensory perception of sweet taste"/>
    <property type="evidence" value="ECO:0000318"/>
    <property type="project" value="GO_Central"/>
</dbReference>
<dbReference type="GO" id="GO:0050917">
    <property type="term" value="P:sensory perception of umami taste"/>
    <property type="evidence" value="ECO:0007669"/>
    <property type="project" value="Ensembl"/>
</dbReference>
<dbReference type="CDD" id="cd00066">
    <property type="entry name" value="G-alpha"/>
    <property type="match status" value="1"/>
</dbReference>
<dbReference type="FunFam" id="1.10.400.10:FF:000001">
    <property type="entry name" value="Guanine nucleotide-binding protein G(I) subunit alpha"/>
    <property type="match status" value="1"/>
</dbReference>
<dbReference type="FunFam" id="3.40.50.300:FF:000720">
    <property type="entry name" value="Guanine nucleotide-binding protein G(k) subunit alpha"/>
    <property type="match status" value="1"/>
</dbReference>
<dbReference type="FunFam" id="3.40.50.300:FF:000256">
    <property type="entry name" value="Guanine nucleotide-binding protein G(t) subunit alpha"/>
    <property type="match status" value="1"/>
</dbReference>
<dbReference type="Gene3D" id="1.10.400.10">
    <property type="entry name" value="GI Alpha 1, domain 2-like"/>
    <property type="match status" value="1"/>
</dbReference>
<dbReference type="Gene3D" id="3.40.50.300">
    <property type="entry name" value="P-loop containing nucleotide triphosphate hydrolases"/>
    <property type="match status" value="1"/>
</dbReference>
<dbReference type="InterPro" id="IPR001408">
    <property type="entry name" value="Gprotein_alpha_I"/>
</dbReference>
<dbReference type="InterPro" id="IPR001019">
    <property type="entry name" value="Gprotein_alpha_su"/>
</dbReference>
<dbReference type="InterPro" id="IPR011025">
    <property type="entry name" value="GproteinA_insert"/>
</dbReference>
<dbReference type="InterPro" id="IPR027417">
    <property type="entry name" value="P-loop_NTPase"/>
</dbReference>
<dbReference type="PANTHER" id="PTHR10218">
    <property type="entry name" value="GTP-BINDING PROTEIN ALPHA SUBUNIT"/>
    <property type="match status" value="1"/>
</dbReference>
<dbReference type="PANTHER" id="PTHR10218:SF66">
    <property type="entry name" value="GUANINE NUCLEOTIDE-BINDING PROTEIN G(T) SUBUNIT ALPHA-3"/>
    <property type="match status" value="1"/>
</dbReference>
<dbReference type="Pfam" id="PF00503">
    <property type="entry name" value="G-alpha"/>
    <property type="match status" value="1"/>
</dbReference>
<dbReference type="PRINTS" id="PR00318">
    <property type="entry name" value="GPROTEINA"/>
</dbReference>
<dbReference type="PRINTS" id="PR00441">
    <property type="entry name" value="GPROTEINAI"/>
</dbReference>
<dbReference type="SMART" id="SM00275">
    <property type="entry name" value="G_alpha"/>
    <property type="match status" value="1"/>
</dbReference>
<dbReference type="SUPFAM" id="SSF52540">
    <property type="entry name" value="P-loop containing nucleoside triphosphate hydrolases"/>
    <property type="match status" value="1"/>
</dbReference>
<dbReference type="SUPFAM" id="SSF47895">
    <property type="entry name" value="Transducin (alpha subunit), insertion domain"/>
    <property type="match status" value="1"/>
</dbReference>
<dbReference type="PROSITE" id="PS51882">
    <property type="entry name" value="G_ALPHA"/>
    <property type="match status" value="1"/>
</dbReference>
<comment type="function">
    <text>Guanine nucleotide-binding protein (G protein) alpha subunit playing a prominent role in bitter and sweet taste transduction as well as in umami (monosodium glutamate, monopotassium glutamate, and inosine monophosphate) taste transduction.</text>
</comment>
<comment type="subunit">
    <text evidence="2 3">G proteins are composed of 3 units; alpha, beta and gamma, respectively GNAT3, GNB1 and GNG13 for Gustducin heterotrimer for bitter taste transduction (By similarity). The alpha chain contains the guanine nucleotide binding site (By similarity). Component of the TAS2R14-GNAT3 complex, consisting of TAS2R14, GNAT3, GNB1 and GNG2; within the complex interacts with TAS2R14; this complex plays a role in the perception of bitterness (By similarity). Gustducin heterotrimer may also be composed of GNAT3, GNB3 and GNG13 (By similarity).</text>
</comment>
<comment type="subcellular location">
    <subcellularLocation>
        <location evidence="1">Cytoplasm</location>
    </subcellularLocation>
</comment>
<comment type="tissue specificity">
    <text evidence="6 7 8">Expressed in epithelial cells of taste buds of the circumvallate, foliate and fungiform. Detected in various region of the respiratory track. Expressed also in spermatozoa.</text>
</comment>
<comment type="induction">
    <text evidence="8">By bitter compounds denatonium, quinine, strychnine, nicotine, atropine, quinacrine and caffeic acid in presence of taste membranes.</text>
</comment>
<comment type="similarity">
    <text evidence="9">Belongs to the G-alpha family. G(i/o/t/z) subfamily.</text>
</comment>
<proteinExistence type="evidence at protein level"/>
<reference key="1">
    <citation type="journal article" date="2009" name="Science">
        <title>The genome sequence of taurine cattle: a window to ruminant biology and evolution.</title>
        <authorList>
            <consortium name="The bovine genome sequencing and analysis consortium"/>
        </authorList>
    </citation>
    <scope>NUCLEOTIDE SEQUENCE [LARGE SCALE GENOMIC DNA]</scope>
    <source>
        <strain>Hereford</strain>
    </source>
</reference>
<reference key="2">
    <citation type="journal article" date="1998" name="Proc. Natl. Acad. Sci. U.S.A.">
        <title>Characterization and solubilization of bitter-responsive receptors that couple to gustducin.</title>
        <authorList>
            <person name="Ming D."/>
            <person name="Ruiz-Avila L."/>
            <person name="Margolskee R.F."/>
        </authorList>
    </citation>
    <scope>MUTAGENESIS OF GLY-352</scope>
    <scope>TISSUE SPECIFICITY</scope>
    <scope>INDUCTION</scope>
</reference>
<reference key="3">
    <citation type="journal article" date="2006" name="J. Anat.">
        <title>Evidence of solitary chemosensory cells in a large mammal: the diffuse chemosensory system in Bos taurus airways.</title>
        <authorList>
            <person name="Tizzano M."/>
            <person name="Merigo F."/>
            <person name="Sbarbati A."/>
        </authorList>
    </citation>
    <scope>TISSUE SPECIFICITY</scope>
</reference>
<reference key="4">
    <citation type="journal article" date="2007" name="J. Comp. Physiol. A">
        <title>Expression of the G-protein alpha-subunit gustducin in mammalian spermatozoa.</title>
        <authorList>
            <person name="Fehr J."/>
            <person name="Meyer D."/>
            <person name="Widmayer P."/>
            <person name="Borth H.C."/>
            <person name="Ackermann F."/>
            <person name="Wilhelm B."/>
            <person name="Gudermann T."/>
            <person name="Boekhoff I."/>
        </authorList>
    </citation>
    <scope>TISSUE SPECIFICITY</scope>
</reference>
<accession>P0C7Q4</accession>
<gene>
    <name type="primary">GNAT3</name>
</gene>
<keyword id="KW-0002">3D-structure</keyword>
<keyword id="KW-0963">Cytoplasm</keyword>
<keyword id="KW-0342">GTP-binding</keyword>
<keyword id="KW-0449">Lipoprotein</keyword>
<keyword id="KW-0460">Magnesium</keyword>
<keyword id="KW-0479">Metal-binding</keyword>
<keyword id="KW-0519">Myristate</keyword>
<keyword id="KW-0547">Nucleotide-binding</keyword>
<keyword id="KW-1185">Reference proteome</keyword>
<keyword id="KW-0807">Transducer</keyword>
<protein>
    <recommendedName>
        <fullName>Guanine nucleotide-binding protein G(t) subunit alpha-3</fullName>
    </recommendedName>
    <alternativeName>
        <fullName>Gustducin alpha-3 chain</fullName>
    </alternativeName>
</protein>
<organism>
    <name type="scientific">Bos taurus</name>
    <name type="common">Bovine</name>
    <dbReference type="NCBI Taxonomy" id="9913"/>
    <lineage>
        <taxon>Eukaryota</taxon>
        <taxon>Metazoa</taxon>
        <taxon>Chordata</taxon>
        <taxon>Craniata</taxon>
        <taxon>Vertebrata</taxon>
        <taxon>Euteleostomi</taxon>
        <taxon>Mammalia</taxon>
        <taxon>Eutheria</taxon>
        <taxon>Laurasiatheria</taxon>
        <taxon>Artiodactyla</taxon>
        <taxon>Ruminantia</taxon>
        <taxon>Pecora</taxon>
        <taxon>Bovidae</taxon>
        <taxon>Bovinae</taxon>
        <taxon>Bos</taxon>
    </lineage>
</organism>
<sequence length="354" mass="40332">MGIGISSESKESAKRSKELEKKLQEDAERDARTVKLLLLGAGESGKSTIVKQMKIIHKNGYSEQECMEFKAVIYSNTLQSILAIVKAMATLEIDYVNPRSAEDQQQLCAMANTLEDGSMTPELAEIIKRLWRDPGVQACFERASEYQLNDSAAYYLNDLDRIAAPGYVPNEQDVLHSRVKTTGIIETQFSFKDLHFRMFDVGGQRSERKKWIHCFEGVTCIIFCAALSAYDMVLVEDEEVNRMHESLHLFNSICNHKYFATTSIVLFLNKKDLFQEKVTKVHLSICFPEYTGPNTFEDAGNYIKNQFLDLNLKKEDKEIYSHMTCATDTQNVKFVFDAVTDIIIKENLKDCGLF</sequence>
<name>GNAT3_BOVIN</name>
<feature type="initiator methionine" description="Removed">
    <location>
        <position position="1"/>
    </location>
</feature>
<feature type="chain" id="PRO_0000342670" description="Guanine nucleotide-binding protein G(t) subunit alpha-3">
    <location>
        <begin position="2"/>
        <end position="354"/>
    </location>
</feature>
<feature type="domain" description="G-alpha" evidence="4">
    <location>
        <begin position="32"/>
        <end position="354"/>
    </location>
</feature>
<feature type="region of interest" description="Disordered" evidence="5">
    <location>
        <begin position="1"/>
        <end position="26"/>
    </location>
</feature>
<feature type="region of interest" description="G1 motif" evidence="4">
    <location>
        <begin position="35"/>
        <end position="48"/>
    </location>
</feature>
<feature type="region of interest" description="G2 motif" evidence="4">
    <location>
        <begin position="173"/>
        <end position="181"/>
    </location>
</feature>
<feature type="region of interest" description="G3 motif" evidence="4">
    <location>
        <begin position="196"/>
        <end position="205"/>
    </location>
</feature>
<feature type="region of interest" description="G4 motif" evidence="4">
    <location>
        <begin position="265"/>
        <end position="272"/>
    </location>
</feature>
<feature type="region of interest" description="G5 motif" evidence="4">
    <location>
        <begin position="324"/>
        <end position="329"/>
    </location>
</feature>
<feature type="compositionally biased region" description="Basic and acidic residues" evidence="5">
    <location>
        <begin position="8"/>
        <end position="26"/>
    </location>
</feature>
<feature type="binding site" evidence="1">
    <location>
        <begin position="40"/>
        <end position="47"/>
    </location>
    <ligand>
        <name>GTP</name>
        <dbReference type="ChEBI" id="CHEBI:37565"/>
    </ligand>
</feature>
<feature type="binding site" evidence="1">
    <location>
        <position position="47"/>
    </location>
    <ligand>
        <name>Mg(2+)</name>
        <dbReference type="ChEBI" id="CHEBI:18420"/>
    </ligand>
</feature>
<feature type="binding site" evidence="1">
    <location>
        <begin position="175"/>
        <end position="181"/>
    </location>
    <ligand>
        <name>GTP</name>
        <dbReference type="ChEBI" id="CHEBI:37565"/>
    </ligand>
</feature>
<feature type="binding site" evidence="1">
    <location>
        <position position="181"/>
    </location>
    <ligand>
        <name>Mg(2+)</name>
        <dbReference type="ChEBI" id="CHEBI:18420"/>
    </ligand>
</feature>
<feature type="binding site" evidence="1">
    <location>
        <begin position="200"/>
        <end position="204"/>
    </location>
    <ligand>
        <name>GTP</name>
        <dbReference type="ChEBI" id="CHEBI:37565"/>
    </ligand>
</feature>
<feature type="binding site" evidence="1">
    <location>
        <begin position="269"/>
        <end position="272"/>
    </location>
    <ligand>
        <name>GTP</name>
        <dbReference type="ChEBI" id="CHEBI:37565"/>
    </ligand>
</feature>
<feature type="binding site" evidence="1">
    <location>
        <position position="326"/>
    </location>
    <ligand>
        <name>GTP</name>
        <dbReference type="ChEBI" id="CHEBI:37565"/>
    </ligand>
</feature>
<feature type="lipid moiety-binding region" description="N-myristoyl glycine" evidence="1">
    <location>
        <position position="2"/>
    </location>
</feature>
<feature type="mutagenesis site" description="Loss of in vitro activation by denatonium due to disruption of interaction with taste receptors." evidence="8">
    <original>G</original>
    <variation>P</variation>
    <location>
        <position position="352"/>
    </location>
</feature>
<feature type="helix" evidence="10">
    <location>
        <begin position="345"/>
        <end position="350"/>
    </location>
</feature>
<evidence type="ECO:0000250" key="1"/>
<evidence type="ECO:0000250" key="2">
    <source>
        <dbReference type="UniProtKB" id="A8MTJ3"/>
    </source>
</evidence>
<evidence type="ECO:0000250" key="3">
    <source>
        <dbReference type="UniProtKB" id="Q3V3I2"/>
    </source>
</evidence>
<evidence type="ECO:0000255" key="4">
    <source>
        <dbReference type="PROSITE-ProRule" id="PRU01230"/>
    </source>
</evidence>
<evidence type="ECO:0000256" key="5">
    <source>
        <dbReference type="SAM" id="MobiDB-lite"/>
    </source>
</evidence>
<evidence type="ECO:0000269" key="6">
    <source>
    </source>
</evidence>
<evidence type="ECO:0000269" key="7">
    <source>
    </source>
</evidence>
<evidence type="ECO:0000269" key="8">
    <source>
    </source>
</evidence>
<evidence type="ECO:0000305" key="9"/>
<evidence type="ECO:0007829" key="10">
    <source>
        <dbReference type="PDB" id="5EN0"/>
    </source>
</evidence>